<dbReference type="EMBL" id="AF188935">
    <property type="protein sequence ID" value="AAF13686.1"/>
    <property type="molecule type" value="Genomic_DNA"/>
</dbReference>
<dbReference type="EMBL" id="AE011191">
    <property type="protein sequence ID" value="AAM26262.1"/>
    <property type="molecule type" value="Genomic_DNA"/>
</dbReference>
<dbReference type="EMBL" id="AE017335">
    <property type="protein sequence ID" value="AAT35524.1"/>
    <property type="molecule type" value="Genomic_DNA"/>
</dbReference>
<dbReference type="RefSeq" id="NP_053236.1">
    <property type="nucleotide sequence ID" value="NC_002146.1"/>
</dbReference>
<dbReference type="RefSeq" id="WP_000081347.1">
    <property type="nucleotide sequence ID" value="NZ_VTZL01000009.1"/>
</dbReference>
<dbReference type="GeneID" id="45025397"/>
<dbReference type="KEGG" id="banh:HYU01_29505"/>
<dbReference type="KEGG" id="bar:GBAA_pXO2_0112"/>
<dbReference type="HOGENOM" id="CLU_2766977_0_0_9"/>
<dbReference type="Proteomes" id="UP000000594">
    <property type="component" value="Plasmid pXO2"/>
</dbReference>
<dbReference type="InterPro" id="IPR020239">
    <property type="entry name" value="DUF5511"/>
</dbReference>
<dbReference type="Pfam" id="PF17630">
    <property type="entry name" value="DUF5511"/>
    <property type="match status" value="1"/>
</dbReference>
<gene>
    <name type="ordered locus">pXO2-82</name>
    <name type="ordered locus">BXB0112</name>
    <name type="ordered locus">GBAA_pXO2_0112</name>
</gene>
<accession>Q9RMV3</accession>
<feature type="chain" id="PRO_0000216866" description="Uncharacterized protein pXO2-82/BXB0112/GBAA_pXO2_0112">
    <location>
        <begin position="1"/>
        <end position="69"/>
    </location>
</feature>
<protein>
    <recommendedName>
        <fullName>Uncharacterized protein pXO2-82/BXB0112/GBAA_pXO2_0112</fullName>
    </recommendedName>
</protein>
<geneLocation type="plasmid">
    <name>pXO2</name>
</geneLocation>
<organism>
    <name type="scientific">Bacillus anthracis</name>
    <dbReference type="NCBI Taxonomy" id="1392"/>
    <lineage>
        <taxon>Bacteria</taxon>
        <taxon>Bacillati</taxon>
        <taxon>Bacillota</taxon>
        <taxon>Bacilli</taxon>
        <taxon>Bacillales</taxon>
        <taxon>Bacillaceae</taxon>
        <taxon>Bacillus</taxon>
        <taxon>Bacillus cereus group</taxon>
    </lineage>
</organism>
<name>Y6612_BACAN</name>
<keyword id="KW-0614">Plasmid</keyword>
<keyword id="KW-1185">Reference proteome</keyword>
<sequence length="69" mass="8041">MSQNNFYMVEHVDQVKNEVHLSKYLFNKQVIVKVSEKEAAAYAEFMNGAVEHDSIPFVKYDEERGLICE</sequence>
<reference key="1">
    <citation type="journal article" date="1999" name="J. Appl. Microbiol.">
        <title>Sequence, assembly and analysis of pXO1 and pXO2.</title>
        <authorList>
            <person name="Okinaka R.T."/>
            <person name="Cloud K."/>
            <person name="Hampton O."/>
            <person name="Hoffmaster A."/>
            <person name="Hill K.K."/>
            <person name="Keim P."/>
            <person name="Koehler T."/>
            <person name="Lamke G."/>
            <person name="Kumano S."/>
            <person name="Manter D."/>
            <person name="Martinez Y."/>
            <person name="Ricke D."/>
            <person name="Svensson R."/>
            <person name="Jackson P.J."/>
        </authorList>
    </citation>
    <scope>NUCLEOTIDE SEQUENCE [GENOMIC DNA]</scope>
    <source>
        <strain>Pasteur</strain>
    </source>
</reference>
<reference key="2">
    <citation type="journal article" date="2002" name="Science">
        <title>Comparative genome sequencing for discovery of novel polymorphisms in Bacillus anthracis.</title>
        <authorList>
            <person name="Read T.D."/>
            <person name="Salzberg S.L."/>
            <person name="Pop M."/>
            <person name="Shumway M.F."/>
            <person name="Umayam L."/>
            <person name="Jiang L."/>
            <person name="Holtzapple E."/>
            <person name="Busch J.D."/>
            <person name="Smith K.L."/>
            <person name="Schupp J.M."/>
            <person name="Solomon D."/>
            <person name="Keim P."/>
            <person name="Fraser C.M."/>
        </authorList>
    </citation>
    <scope>NUCLEOTIDE SEQUENCE [GENOMIC DNA]</scope>
    <source>
        <strain>Ames / isolate Florida / A2012</strain>
    </source>
</reference>
<reference key="3">
    <citation type="journal article" date="2009" name="J. Bacteriol.">
        <title>The complete genome sequence of Bacillus anthracis Ames 'Ancestor'.</title>
        <authorList>
            <person name="Ravel J."/>
            <person name="Jiang L."/>
            <person name="Stanley S.T."/>
            <person name="Wilson M.R."/>
            <person name="Decker R.S."/>
            <person name="Read T.D."/>
            <person name="Worsham P."/>
            <person name="Keim P.S."/>
            <person name="Salzberg S.L."/>
            <person name="Fraser-Liggett C.M."/>
            <person name="Rasko D.A."/>
        </authorList>
    </citation>
    <scope>NUCLEOTIDE SEQUENCE [LARGE SCALE GENOMIC DNA]</scope>
    <source>
        <strain>Ames ancestor</strain>
    </source>
</reference>
<proteinExistence type="predicted"/>